<organism>
    <name type="scientific">Bos taurus</name>
    <name type="common">Bovine</name>
    <dbReference type="NCBI Taxonomy" id="9913"/>
    <lineage>
        <taxon>Eukaryota</taxon>
        <taxon>Metazoa</taxon>
        <taxon>Chordata</taxon>
        <taxon>Craniata</taxon>
        <taxon>Vertebrata</taxon>
        <taxon>Euteleostomi</taxon>
        <taxon>Mammalia</taxon>
        <taxon>Eutheria</taxon>
        <taxon>Laurasiatheria</taxon>
        <taxon>Artiodactyla</taxon>
        <taxon>Ruminantia</taxon>
        <taxon>Pecora</taxon>
        <taxon>Bovidae</taxon>
        <taxon>Bovinae</taxon>
        <taxon>Bos</taxon>
    </lineage>
</organism>
<comment type="function">
    <text evidence="2">Transcriptional coactivator that specifically associates with either POU2F1/OCT1 or POU2F2/OCT2. It boosts the POU2F1/OCT1 mediated promoter activity and to a lesser extent, that of POU2F2/OCT2. It recognizes the POU domains of POU2F1/OCT1 and POU2F2/OCT2. It is essential for the response of B-cells to antigens and required for the formation of germinal centers. Regulates IL6 expression in B cells as POU2F2/OCT2 coactivator.</text>
</comment>
<comment type="subunit">
    <text evidence="1">Interacts with POU2F1/OCT1 and POU2F2/OCT2; the interaction increases POU2F1 and POU2F2 transactivation activity.</text>
</comment>
<comment type="subcellular location">
    <subcellularLocation>
        <location evidence="2">Nucleus</location>
    </subcellularLocation>
</comment>
<comment type="domain">
    <text evidence="1">In the N-terminus possesses a conserved domain OCA for bivalent binding to class II POU domain-containing transcription factors and to an octamer DNA motif.</text>
</comment>
<comment type="PTM">
    <text evidence="1">Ubiquitinated; mediated by SIAH1 or SIAH2 and leading to its subsequent proteasomal degradation.</text>
</comment>
<comment type="similarity">
    <text evidence="5">Belongs to the POU2AF family.</text>
</comment>
<gene>
    <name type="primary">POU2AF1</name>
    <name type="synonym">OBF1</name>
</gene>
<proteinExistence type="evidence at transcript level"/>
<protein>
    <recommendedName>
        <fullName>POU domain class 2-associating factor 1</fullName>
    </recommendedName>
    <alternativeName>
        <fullName>B-cell-specific coactivator OBF-1</fullName>
    </alternativeName>
    <alternativeName>
        <fullName>OCT-binding factor 1</fullName>
    </alternativeName>
</protein>
<evidence type="ECO:0000250" key="1">
    <source>
        <dbReference type="UniProtKB" id="Q16633"/>
    </source>
</evidence>
<evidence type="ECO:0000250" key="2">
    <source>
        <dbReference type="UniProtKB" id="Q64693"/>
    </source>
</evidence>
<evidence type="ECO:0000255" key="3">
    <source>
        <dbReference type="PROSITE-ProRule" id="PRU01347"/>
    </source>
</evidence>
<evidence type="ECO:0000256" key="4">
    <source>
        <dbReference type="SAM" id="MobiDB-lite"/>
    </source>
</evidence>
<evidence type="ECO:0000305" key="5"/>
<dbReference type="EMBL" id="BC105441">
    <property type="protein sequence ID" value="AAI05442.1"/>
    <property type="molecule type" value="mRNA"/>
</dbReference>
<dbReference type="RefSeq" id="NP_001069383.1">
    <property type="nucleotide sequence ID" value="NM_001075915.1"/>
</dbReference>
<dbReference type="SMR" id="Q2KJA4"/>
<dbReference type="FunCoup" id="Q2KJA4">
    <property type="interactions" value="226"/>
</dbReference>
<dbReference type="STRING" id="9913.ENSBTAP00000064317"/>
<dbReference type="PaxDb" id="9913-ENSBTAP00000008246"/>
<dbReference type="GeneID" id="528475"/>
<dbReference type="KEGG" id="bta:528475"/>
<dbReference type="CTD" id="5450"/>
<dbReference type="VEuPathDB" id="HostDB:ENSBTAG00000006282"/>
<dbReference type="eggNOG" id="ENOG502R5JD">
    <property type="taxonomic scope" value="Eukaryota"/>
</dbReference>
<dbReference type="HOGENOM" id="CLU_095920_0_0_1"/>
<dbReference type="InParanoid" id="Q2KJA4"/>
<dbReference type="OMA" id="SPIGQPC"/>
<dbReference type="OrthoDB" id="194358at2759"/>
<dbReference type="TreeFam" id="TF332565"/>
<dbReference type="Proteomes" id="UP000009136">
    <property type="component" value="Chromosome 15"/>
</dbReference>
<dbReference type="Bgee" id="ENSBTAG00000006282">
    <property type="expression patterns" value="Expressed in nasopharynx and 72 other cell types or tissues"/>
</dbReference>
<dbReference type="GO" id="GO:0090575">
    <property type="term" value="C:RNA polymerase II transcription regulator complex"/>
    <property type="evidence" value="ECO:0000318"/>
    <property type="project" value="GO_Central"/>
</dbReference>
<dbReference type="GO" id="GO:0003677">
    <property type="term" value="F:DNA binding"/>
    <property type="evidence" value="ECO:0007669"/>
    <property type="project" value="InterPro"/>
</dbReference>
<dbReference type="GO" id="GO:0070974">
    <property type="term" value="F:POU domain binding"/>
    <property type="evidence" value="ECO:0007669"/>
    <property type="project" value="InterPro"/>
</dbReference>
<dbReference type="GO" id="GO:0003713">
    <property type="term" value="F:transcription coactivator activity"/>
    <property type="evidence" value="ECO:0000250"/>
    <property type="project" value="UniProtKB"/>
</dbReference>
<dbReference type="GO" id="GO:0098586">
    <property type="term" value="P:cellular response to virus"/>
    <property type="evidence" value="ECO:0000250"/>
    <property type="project" value="UniProtKB"/>
</dbReference>
<dbReference type="GO" id="GO:0002314">
    <property type="term" value="P:germinal center B cell differentiation"/>
    <property type="evidence" value="ECO:0000250"/>
    <property type="project" value="UniProtKB"/>
</dbReference>
<dbReference type="GO" id="GO:0032755">
    <property type="term" value="P:positive regulation of interleukin-6 production"/>
    <property type="evidence" value="ECO:0000250"/>
    <property type="project" value="UniProtKB"/>
</dbReference>
<dbReference type="GO" id="GO:0045944">
    <property type="term" value="P:positive regulation of transcription by RNA polymerase II"/>
    <property type="evidence" value="ECO:0000318"/>
    <property type="project" value="GO_Central"/>
</dbReference>
<dbReference type="InterPro" id="IPR047571">
    <property type="entry name" value="OCA"/>
</dbReference>
<dbReference type="InterPro" id="IPR015389">
    <property type="entry name" value="PD-C2-AF1"/>
</dbReference>
<dbReference type="PANTHER" id="PTHR15363">
    <property type="entry name" value="POU DOMAIN CLASS 2-ASSOCIATING FACTOR 1"/>
    <property type="match status" value="1"/>
</dbReference>
<dbReference type="PANTHER" id="PTHR15363:SF3">
    <property type="entry name" value="POU DOMAIN CLASS 2-ASSOCIATING FACTOR 1"/>
    <property type="match status" value="1"/>
</dbReference>
<dbReference type="Pfam" id="PF09310">
    <property type="entry name" value="PD-C2-AF1"/>
    <property type="match status" value="1"/>
</dbReference>
<dbReference type="PROSITE" id="PS52003">
    <property type="entry name" value="OCA"/>
    <property type="match status" value="1"/>
</dbReference>
<name>OBF1_BOVIN</name>
<keyword id="KW-0010">Activator</keyword>
<keyword id="KW-0539">Nucleus</keyword>
<keyword id="KW-1185">Reference proteome</keyword>
<keyword id="KW-0804">Transcription</keyword>
<keyword id="KW-0805">Transcription regulation</keyword>
<keyword id="KW-0832">Ubl conjugation</keyword>
<accession>Q2KJA4</accession>
<sequence>MLWQKPTAPEQAPAPPRPYQGVRVKEPVKELLRRKRGHASSGASVTPTAVVLPHQPLATYTTVGPSCLDMEVSASTVTEEGALCAGWLSQPAPAALQPLAPWTPYTEYVSHEAVSCPYSADMYVQPVCPSYTVVGPSSVLTYASQPLITNVTTRSAAAPTVGPPLEGPEHQAPLTYFPWPQPLSTLPTSTLQYQPPAPALPGPQFVQLPISIPEPVLPDAEDPRRAIGSLTIDKLLLEEEDSDTYALNHTLSVEGF</sequence>
<feature type="chain" id="PRO_0000285835" description="POU domain class 2-associating factor 1">
    <location>
        <begin position="1"/>
        <end position="256"/>
    </location>
</feature>
<feature type="domain" description="OCA" evidence="3">
    <location>
        <begin position="16"/>
        <end position="38"/>
    </location>
</feature>
<feature type="region of interest" description="Disordered" evidence="4">
    <location>
        <begin position="1"/>
        <end position="23"/>
    </location>
</feature>
<reference key="1">
    <citation type="submission" date="2005-09" db="EMBL/GenBank/DDBJ databases">
        <authorList>
            <consortium name="NIH - Mammalian Gene Collection (MGC) project"/>
        </authorList>
    </citation>
    <scope>NUCLEOTIDE SEQUENCE [LARGE SCALE MRNA]</scope>
    <source>
        <strain>Hereford</strain>
        <tissue>Thymus</tissue>
    </source>
</reference>